<dbReference type="EC" id="1.11.1.24" evidence="1"/>
<dbReference type="EMBL" id="CP000702">
    <property type="protein sequence ID" value="ABQ46150.1"/>
    <property type="molecule type" value="Genomic_DNA"/>
</dbReference>
<dbReference type="RefSeq" id="WP_011942821.1">
    <property type="nucleotide sequence ID" value="NC_009486.1"/>
</dbReference>
<dbReference type="SMR" id="A5IIX7"/>
<dbReference type="STRING" id="390874.Tpet_0121"/>
<dbReference type="KEGG" id="tpt:Tpet_0121"/>
<dbReference type="eggNOG" id="COG0450">
    <property type="taxonomic scope" value="Bacteria"/>
</dbReference>
<dbReference type="HOGENOM" id="CLU_042529_4_4_0"/>
<dbReference type="Proteomes" id="UP000006558">
    <property type="component" value="Chromosome"/>
</dbReference>
<dbReference type="GO" id="GO:0005829">
    <property type="term" value="C:cytosol"/>
    <property type="evidence" value="ECO:0007669"/>
    <property type="project" value="TreeGrafter"/>
</dbReference>
<dbReference type="GO" id="GO:0008379">
    <property type="term" value="F:thioredoxin peroxidase activity"/>
    <property type="evidence" value="ECO:0007669"/>
    <property type="project" value="TreeGrafter"/>
</dbReference>
<dbReference type="GO" id="GO:0045454">
    <property type="term" value="P:cell redox homeostasis"/>
    <property type="evidence" value="ECO:0007669"/>
    <property type="project" value="TreeGrafter"/>
</dbReference>
<dbReference type="GO" id="GO:0033554">
    <property type="term" value="P:cellular response to stress"/>
    <property type="evidence" value="ECO:0007669"/>
    <property type="project" value="TreeGrafter"/>
</dbReference>
<dbReference type="GO" id="GO:0042744">
    <property type="term" value="P:hydrogen peroxide catabolic process"/>
    <property type="evidence" value="ECO:0007669"/>
    <property type="project" value="TreeGrafter"/>
</dbReference>
<dbReference type="GO" id="GO:0006979">
    <property type="term" value="P:response to oxidative stress"/>
    <property type="evidence" value="ECO:0007669"/>
    <property type="project" value="TreeGrafter"/>
</dbReference>
<dbReference type="CDD" id="cd03016">
    <property type="entry name" value="PRX_1cys"/>
    <property type="match status" value="1"/>
</dbReference>
<dbReference type="FunFam" id="3.30.1020.10:FF:000002">
    <property type="entry name" value="Peroxiredoxin"/>
    <property type="match status" value="1"/>
</dbReference>
<dbReference type="FunFam" id="3.40.30.10:FF:000011">
    <property type="entry name" value="Peroxiredoxin PRX1"/>
    <property type="match status" value="1"/>
</dbReference>
<dbReference type="Gene3D" id="3.30.1020.10">
    <property type="entry name" value="Antioxidant, Horf6, Chain A, domain2"/>
    <property type="match status" value="1"/>
</dbReference>
<dbReference type="Gene3D" id="3.40.30.10">
    <property type="entry name" value="Glutaredoxin"/>
    <property type="match status" value="1"/>
</dbReference>
<dbReference type="HAMAP" id="MF_00401">
    <property type="entry name" value="Peroxiredoxin"/>
    <property type="match status" value="1"/>
</dbReference>
<dbReference type="InterPro" id="IPR000866">
    <property type="entry name" value="AhpC/TSA"/>
</dbReference>
<dbReference type="InterPro" id="IPR050217">
    <property type="entry name" value="Peroxiredoxin"/>
</dbReference>
<dbReference type="InterPro" id="IPR024706">
    <property type="entry name" value="Peroxiredoxin_AhpC-typ"/>
</dbReference>
<dbReference type="InterPro" id="IPR019479">
    <property type="entry name" value="Peroxiredoxin_C"/>
</dbReference>
<dbReference type="InterPro" id="IPR022915">
    <property type="entry name" value="Peroxiredoxin_TDXH"/>
</dbReference>
<dbReference type="InterPro" id="IPR045020">
    <property type="entry name" value="PRX_1cys"/>
</dbReference>
<dbReference type="InterPro" id="IPR036249">
    <property type="entry name" value="Thioredoxin-like_sf"/>
</dbReference>
<dbReference type="InterPro" id="IPR013766">
    <property type="entry name" value="Thioredoxin_domain"/>
</dbReference>
<dbReference type="NCBIfam" id="NF009668">
    <property type="entry name" value="PRK13189.1"/>
    <property type="match status" value="1"/>
</dbReference>
<dbReference type="PANTHER" id="PTHR10681:SF121">
    <property type="entry name" value="ALKYL HYDROPEROXIDE REDUCTASE C"/>
    <property type="match status" value="1"/>
</dbReference>
<dbReference type="PANTHER" id="PTHR10681">
    <property type="entry name" value="THIOREDOXIN PEROXIDASE"/>
    <property type="match status" value="1"/>
</dbReference>
<dbReference type="Pfam" id="PF10417">
    <property type="entry name" value="1-cysPrx_C"/>
    <property type="match status" value="1"/>
</dbReference>
<dbReference type="Pfam" id="PF00578">
    <property type="entry name" value="AhpC-TSA"/>
    <property type="match status" value="1"/>
</dbReference>
<dbReference type="PIRSF" id="PIRSF000239">
    <property type="entry name" value="AHPC"/>
    <property type="match status" value="1"/>
</dbReference>
<dbReference type="SUPFAM" id="SSF52833">
    <property type="entry name" value="Thioredoxin-like"/>
    <property type="match status" value="1"/>
</dbReference>
<dbReference type="PROSITE" id="PS51352">
    <property type="entry name" value="THIOREDOXIN_2"/>
    <property type="match status" value="1"/>
</dbReference>
<name>TDXH_THEP1</name>
<accession>A5IIX7</accession>
<proteinExistence type="inferred from homology"/>
<reference key="1">
    <citation type="submission" date="2007-05" db="EMBL/GenBank/DDBJ databases">
        <title>Complete sequence of Thermotoga petrophila RKU-1.</title>
        <authorList>
            <consortium name="US DOE Joint Genome Institute"/>
            <person name="Copeland A."/>
            <person name="Lucas S."/>
            <person name="Lapidus A."/>
            <person name="Barry K."/>
            <person name="Glavina del Rio T."/>
            <person name="Dalin E."/>
            <person name="Tice H."/>
            <person name="Pitluck S."/>
            <person name="Sims D."/>
            <person name="Brettin T."/>
            <person name="Bruce D."/>
            <person name="Detter J.C."/>
            <person name="Han C."/>
            <person name="Tapia R."/>
            <person name="Schmutz J."/>
            <person name="Larimer F."/>
            <person name="Land M."/>
            <person name="Hauser L."/>
            <person name="Kyrpides N."/>
            <person name="Mikhailova N."/>
            <person name="Nelson K."/>
            <person name="Gogarten J.P."/>
            <person name="Noll K."/>
            <person name="Richardson P."/>
        </authorList>
    </citation>
    <scope>NUCLEOTIDE SEQUENCE [LARGE SCALE GENOMIC DNA]</scope>
    <source>
        <strain>ATCC BAA-488 / DSM 13995 / JCM 10881 / RKU-1</strain>
    </source>
</reference>
<sequence length="215" mass="24766">MEGRIPLIGEEFPRLEVKTTHGKKILPDDFRGKWFVLFSHPADFTPVCTTEFVAFQKRYDEFKKLNTELIGLSIDQVFSHIKWIEWIKEKLGVEIEFPVIADDLGEVSRRLGLIHPSKGTNTVRAVFIVDPNGIIRAIVYYPQEVGRNIDEILRAVRALQTSDEKGVAIPANWPSNELINDSVIVPPASSVEEARERLESKDFECYDWWFCYKKV</sequence>
<organism>
    <name type="scientific">Thermotoga petrophila (strain ATCC BAA-488 / DSM 13995 / JCM 10881 / RKU-1)</name>
    <dbReference type="NCBI Taxonomy" id="390874"/>
    <lineage>
        <taxon>Bacteria</taxon>
        <taxon>Thermotogati</taxon>
        <taxon>Thermotogota</taxon>
        <taxon>Thermotogae</taxon>
        <taxon>Thermotogales</taxon>
        <taxon>Thermotogaceae</taxon>
        <taxon>Thermotoga</taxon>
    </lineage>
</organism>
<protein>
    <recommendedName>
        <fullName evidence="1">Peroxiredoxin</fullName>
        <ecNumber evidence="1">1.11.1.24</ecNumber>
    </recommendedName>
    <alternativeName>
        <fullName evidence="1">Thioredoxin peroxidase</fullName>
    </alternativeName>
    <alternativeName>
        <fullName evidence="1">Thioredoxin-dependent peroxiredoxin</fullName>
    </alternativeName>
</protein>
<comment type="function">
    <text evidence="1">Thiol-specific peroxidase that catalyzes the reduction of hydrogen peroxide and organic hydroperoxides to water and alcohols, respectively. Plays a role in cell protection against oxidative stress by detoxifying peroxides.</text>
</comment>
<comment type="catalytic activity">
    <reaction evidence="1">
        <text>a hydroperoxide + [thioredoxin]-dithiol = an alcohol + [thioredoxin]-disulfide + H2O</text>
        <dbReference type="Rhea" id="RHEA:62620"/>
        <dbReference type="Rhea" id="RHEA-COMP:10698"/>
        <dbReference type="Rhea" id="RHEA-COMP:10700"/>
        <dbReference type="ChEBI" id="CHEBI:15377"/>
        <dbReference type="ChEBI" id="CHEBI:29950"/>
        <dbReference type="ChEBI" id="CHEBI:30879"/>
        <dbReference type="ChEBI" id="CHEBI:35924"/>
        <dbReference type="ChEBI" id="CHEBI:50058"/>
        <dbReference type="EC" id="1.11.1.24"/>
    </reaction>
</comment>
<comment type="subunit">
    <text evidence="1">Homodecamer. Pentamer of dimers that assemble into a ring structure.</text>
</comment>
<comment type="subcellular location">
    <subcellularLocation>
        <location evidence="1">Cytoplasm</location>
    </subcellularLocation>
</comment>
<comment type="miscellaneous">
    <text evidence="1">The active site is a conserved redox-active cysteine residue, the peroxidatic cysteine (C(P)), which makes the nucleophilic attack on the peroxide substrate. The peroxide oxidizes the C(P)-SH to cysteine sulfenic acid (C(P)-SOH), which then reacts with another cysteine residue, the resolving cysteine (C(R)), to form a disulfide bridge. The disulfide is subsequently reduced by an appropriate electron donor to complete the catalytic cycle. Although the primary sequence of this enzyme is similar to those of the 1-Cys Prx6 enzymes, its catalytic properties resemble those of the typical 2-Cys Prxs and C(R) is provided by the other dimeric subunit to form an intersubunit disulfide. The disulfide is subsequently reduced by thioredoxin.</text>
</comment>
<comment type="similarity">
    <text evidence="1">Belongs to the peroxiredoxin family. Prx6 subfamily.</text>
</comment>
<gene>
    <name type="ordered locus">Tpet_0121</name>
</gene>
<evidence type="ECO:0000255" key="1">
    <source>
        <dbReference type="HAMAP-Rule" id="MF_00401"/>
    </source>
</evidence>
<keyword id="KW-0049">Antioxidant</keyword>
<keyword id="KW-0963">Cytoplasm</keyword>
<keyword id="KW-1015">Disulfide bond</keyword>
<keyword id="KW-0560">Oxidoreductase</keyword>
<keyword id="KW-0575">Peroxidase</keyword>
<keyword id="KW-0676">Redox-active center</keyword>
<feature type="chain" id="PRO_1000049622" description="Peroxiredoxin">
    <location>
        <begin position="1"/>
        <end position="215"/>
    </location>
</feature>
<feature type="domain" description="Thioredoxin" evidence="1">
    <location>
        <begin position="6"/>
        <end position="161"/>
    </location>
</feature>
<feature type="active site" description="Cysteine sulfenic acid (-SOH) intermediate" evidence="1">
    <location>
        <position position="48"/>
    </location>
</feature>
<feature type="binding site" evidence="1">
    <location>
        <position position="124"/>
    </location>
    <ligand>
        <name>substrate</name>
    </ligand>
</feature>
<feature type="disulfide bond" description="Interchain (with C-211); in linked form" evidence="1">
    <location>
        <position position="48"/>
    </location>
</feature>
<feature type="disulfide bond" description="Alternate" evidence="1">
    <location>
        <begin position="205"/>
        <end position="211"/>
    </location>
</feature>
<feature type="disulfide bond" description="Interchain (with C-48); in linked form" evidence="1">
    <location>
        <position position="211"/>
    </location>
</feature>